<comment type="function">
    <text evidence="1">Catalyzes the last two sequential reactions in the de novo biosynthetic pathway for UDP-N-acetylglucosamine (UDP-GlcNAc). The C-terminal domain catalyzes the transfer of acetyl group from acetyl coenzyme A to glucosamine-1-phosphate (GlcN-1-P) to produce N-acetylglucosamine-1-phosphate (GlcNAc-1-P), which is converted into UDP-GlcNAc by the transfer of uridine 5-monophosphate (from uridine 5-triphosphate), a reaction catalyzed by the N-terminal domain.</text>
</comment>
<comment type="catalytic activity">
    <reaction evidence="1">
        <text>alpha-D-glucosamine 1-phosphate + acetyl-CoA = N-acetyl-alpha-D-glucosamine 1-phosphate + CoA + H(+)</text>
        <dbReference type="Rhea" id="RHEA:13725"/>
        <dbReference type="ChEBI" id="CHEBI:15378"/>
        <dbReference type="ChEBI" id="CHEBI:57287"/>
        <dbReference type="ChEBI" id="CHEBI:57288"/>
        <dbReference type="ChEBI" id="CHEBI:57776"/>
        <dbReference type="ChEBI" id="CHEBI:58516"/>
        <dbReference type="EC" id="2.3.1.157"/>
    </reaction>
</comment>
<comment type="catalytic activity">
    <reaction evidence="1">
        <text>N-acetyl-alpha-D-glucosamine 1-phosphate + UTP + H(+) = UDP-N-acetyl-alpha-D-glucosamine + diphosphate</text>
        <dbReference type="Rhea" id="RHEA:13509"/>
        <dbReference type="ChEBI" id="CHEBI:15378"/>
        <dbReference type="ChEBI" id="CHEBI:33019"/>
        <dbReference type="ChEBI" id="CHEBI:46398"/>
        <dbReference type="ChEBI" id="CHEBI:57705"/>
        <dbReference type="ChEBI" id="CHEBI:57776"/>
        <dbReference type="EC" id="2.7.7.23"/>
    </reaction>
</comment>
<comment type="cofactor">
    <cofactor evidence="1">
        <name>Mg(2+)</name>
        <dbReference type="ChEBI" id="CHEBI:18420"/>
    </cofactor>
    <text evidence="1">Binds 1 Mg(2+) ion per subunit.</text>
</comment>
<comment type="pathway">
    <text evidence="1">Nucleotide-sugar biosynthesis; UDP-N-acetyl-alpha-D-glucosamine biosynthesis; N-acetyl-alpha-D-glucosamine 1-phosphate from alpha-D-glucosamine 6-phosphate (route II): step 2/2.</text>
</comment>
<comment type="pathway">
    <text evidence="1">Nucleotide-sugar biosynthesis; UDP-N-acetyl-alpha-D-glucosamine biosynthesis; UDP-N-acetyl-alpha-D-glucosamine from N-acetyl-alpha-D-glucosamine 1-phosphate: step 1/1.</text>
</comment>
<comment type="pathway">
    <text evidence="1">Bacterial outer membrane biogenesis; LPS lipid A biosynthesis.</text>
</comment>
<comment type="subunit">
    <text evidence="1">Homotrimer.</text>
</comment>
<comment type="subcellular location">
    <subcellularLocation>
        <location evidence="1">Cytoplasm</location>
    </subcellularLocation>
</comment>
<comment type="similarity">
    <text evidence="1">In the N-terminal section; belongs to the N-acetylglucosamine-1-phosphate uridyltransferase family.</text>
</comment>
<comment type="similarity">
    <text evidence="1">In the C-terminal section; belongs to the transferase hexapeptide repeat family.</text>
</comment>
<organism>
    <name type="scientific">Xanthomonas campestris pv. campestris (strain B100)</name>
    <dbReference type="NCBI Taxonomy" id="509169"/>
    <lineage>
        <taxon>Bacteria</taxon>
        <taxon>Pseudomonadati</taxon>
        <taxon>Pseudomonadota</taxon>
        <taxon>Gammaproteobacteria</taxon>
        <taxon>Lysobacterales</taxon>
        <taxon>Lysobacteraceae</taxon>
        <taxon>Xanthomonas</taxon>
    </lineage>
</organism>
<dbReference type="EC" id="2.7.7.23" evidence="1"/>
<dbReference type="EC" id="2.3.1.157" evidence="1"/>
<dbReference type="EMBL" id="AM920689">
    <property type="protein sequence ID" value="CAP53157.1"/>
    <property type="molecule type" value="Genomic_DNA"/>
</dbReference>
<dbReference type="SMR" id="B0RWB8"/>
<dbReference type="KEGG" id="xca:xcc-b100_3790"/>
<dbReference type="HOGENOM" id="CLU_029499_15_2_6"/>
<dbReference type="UniPathway" id="UPA00113">
    <property type="reaction ID" value="UER00532"/>
</dbReference>
<dbReference type="UniPathway" id="UPA00113">
    <property type="reaction ID" value="UER00533"/>
</dbReference>
<dbReference type="UniPathway" id="UPA00973"/>
<dbReference type="Proteomes" id="UP000001188">
    <property type="component" value="Chromosome"/>
</dbReference>
<dbReference type="GO" id="GO:0005737">
    <property type="term" value="C:cytoplasm"/>
    <property type="evidence" value="ECO:0007669"/>
    <property type="project" value="UniProtKB-SubCell"/>
</dbReference>
<dbReference type="GO" id="GO:0016020">
    <property type="term" value="C:membrane"/>
    <property type="evidence" value="ECO:0007669"/>
    <property type="project" value="GOC"/>
</dbReference>
<dbReference type="GO" id="GO:0019134">
    <property type="term" value="F:glucosamine-1-phosphate N-acetyltransferase activity"/>
    <property type="evidence" value="ECO:0007669"/>
    <property type="project" value="UniProtKB-UniRule"/>
</dbReference>
<dbReference type="GO" id="GO:0000287">
    <property type="term" value="F:magnesium ion binding"/>
    <property type="evidence" value="ECO:0007669"/>
    <property type="project" value="UniProtKB-UniRule"/>
</dbReference>
<dbReference type="GO" id="GO:0003977">
    <property type="term" value="F:UDP-N-acetylglucosamine diphosphorylase activity"/>
    <property type="evidence" value="ECO:0007669"/>
    <property type="project" value="UniProtKB-UniRule"/>
</dbReference>
<dbReference type="GO" id="GO:0000902">
    <property type="term" value="P:cell morphogenesis"/>
    <property type="evidence" value="ECO:0007669"/>
    <property type="project" value="UniProtKB-UniRule"/>
</dbReference>
<dbReference type="GO" id="GO:0071555">
    <property type="term" value="P:cell wall organization"/>
    <property type="evidence" value="ECO:0007669"/>
    <property type="project" value="UniProtKB-KW"/>
</dbReference>
<dbReference type="GO" id="GO:0009245">
    <property type="term" value="P:lipid A biosynthetic process"/>
    <property type="evidence" value="ECO:0007669"/>
    <property type="project" value="UniProtKB-UniRule"/>
</dbReference>
<dbReference type="GO" id="GO:0009252">
    <property type="term" value="P:peptidoglycan biosynthetic process"/>
    <property type="evidence" value="ECO:0007669"/>
    <property type="project" value="UniProtKB-UniRule"/>
</dbReference>
<dbReference type="GO" id="GO:0008360">
    <property type="term" value="P:regulation of cell shape"/>
    <property type="evidence" value="ECO:0007669"/>
    <property type="project" value="UniProtKB-KW"/>
</dbReference>
<dbReference type="GO" id="GO:0006048">
    <property type="term" value="P:UDP-N-acetylglucosamine biosynthetic process"/>
    <property type="evidence" value="ECO:0007669"/>
    <property type="project" value="UniProtKB-UniPathway"/>
</dbReference>
<dbReference type="CDD" id="cd02540">
    <property type="entry name" value="GT2_GlmU_N_bac"/>
    <property type="match status" value="1"/>
</dbReference>
<dbReference type="CDD" id="cd03353">
    <property type="entry name" value="LbH_GlmU_C"/>
    <property type="match status" value="1"/>
</dbReference>
<dbReference type="Gene3D" id="2.160.10.10">
    <property type="entry name" value="Hexapeptide repeat proteins"/>
    <property type="match status" value="1"/>
</dbReference>
<dbReference type="Gene3D" id="3.90.550.10">
    <property type="entry name" value="Spore Coat Polysaccharide Biosynthesis Protein SpsA, Chain A"/>
    <property type="match status" value="1"/>
</dbReference>
<dbReference type="HAMAP" id="MF_01631">
    <property type="entry name" value="GlmU"/>
    <property type="match status" value="1"/>
</dbReference>
<dbReference type="InterPro" id="IPR005882">
    <property type="entry name" value="Bifunctional_GlmU"/>
</dbReference>
<dbReference type="InterPro" id="IPR050065">
    <property type="entry name" value="GlmU-like"/>
</dbReference>
<dbReference type="InterPro" id="IPR038009">
    <property type="entry name" value="GlmU_C_LbH"/>
</dbReference>
<dbReference type="InterPro" id="IPR001451">
    <property type="entry name" value="Hexapep"/>
</dbReference>
<dbReference type="InterPro" id="IPR018357">
    <property type="entry name" value="Hexapep_transf_CS"/>
</dbReference>
<dbReference type="InterPro" id="IPR025877">
    <property type="entry name" value="MobA-like_NTP_Trfase"/>
</dbReference>
<dbReference type="InterPro" id="IPR029044">
    <property type="entry name" value="Nucleotide-diphossugar_trans"/>
</dbReference>
<dbReference type="InterPro" id="IPR011004">
    <property type="entry name" value="Trimer_LpxA-like_sf"/>
</dbReference>
<dbReference type="NCBIfam" id="TIGR01173">
    <property type="entry name" value="glmU"/>
    <property type="match status" value="1"/>
</dbReference>
<dbReference type="PANTHER" id="PTHR43584:SF3">
    <property type="entry name" value="BIFUNCTIONAL PROTEIN GLMU"/>
    <property type="match status" value="1"/>
</dbReference>
<dbReference type="PANTHER" id="PTHR43584">
    <property type="entry name" value="NUCLEOTIDYL TRANSFERASE"/>
    <property type="match status" value="1"/>
</dbReference>
<dbReference type="Pfam" id="PF00132">
    <property type="entry name" value="Hexapep"/>
    <property type="match status" value="1"/>
</dbReference>
<dbReference type="Pfam" id="PF12804">
    <property type="entry name" value="NTP_transf_3"/>
    <property type="match status" value="1"/>
</dbReference>
<dbReference type="SUPFAM" id="SSF53448">
    <property type="entry name" value="Nucleotide-diphospho-sugar transferases"/>
    <property type="match status" value="1"/>
</dbReference>
<dbReference type="SUPFAM" id="SSF51161">
    <property type="entry name" value="Trimeric LpxA-like enzymes"/>
    <property type="match status" value="1"/>
</dbReference>
<dbReference type="PROSITE" id="PS00101">
    <property type="entry name" value="HEXAPEP_TRANSFERASES"/>
    <property type="match status" value="1"/>
</dbReference>
<sequence>MTLPLHVVILAAGEGKRMRSALPKVLQPLAGQPMLAHVIATARELQPAAIHVVHGHGGAQVQAAFADQPDLQWAEQRQQLGTGHAVQQALHAVPDAATVLVLYGDVPLIRSESLRELLHAPGRIAVLVADLANPTGYGRIVRNPEGKVAAIVEQKDADDEQRRIRTINTGILTAESTALRRWLGGLSNDNAQGEFYLTDVFARAAADYTPADMVQVSDPQDVEGANDPWQLAQLERAWQLRAARALCLQGVRMADPARVEQRGRVQVGHDVQLDIDVILEGEVTLGDGVVIGPFVRLRDVQLAAGTQVRAHCDLEGVVTEGAVQIGPFARLRPGTVLADGVHIGNFVETKKVVMGAGSKANHLTYLGDAVVGSKVNIGAGTITCNYDGVNKSQTTIGDGAFVGSNSALVAPIEIGTGATIGAGSVITRDAPPHQLSVARPRQTVIEGWERPKKK</sequence>
<reference key="1">
    <citation type="journal article" date="2008" name="J. Biotechnol.">
        <title>The genome of Xanthomonas campestris pv. campestris B100 and its use for the reconstruction of metabolic pathways involved in xanthan biosynthesis.</title>
        <authorList>
            <person name="Vorhoelter F.-J."/>
            <person name="Schneiker S."/>
            <person name="Goesmann A."/>
            <person name="Krause L."/>
            <person name="Bekel T."/>
            <person name="Kaiser O."/>
            <person name="Linke B."/>
            <person name="Patschkowski T."/>
            <person name="Rueckert C."/>
            <person name="Schmid J."/>
            <person name="Sidhu V.K."/>
            <person name="Sieber V."/>
            <person name="Tauch A."/>
            <person name="Watt S.A."/>
            <person name="Weisshaar B."/>
            <person name="Becker A."/>
            <person name="Niehaus K."/>
            <person name="Puehler A."/>
        </authorList>
    </citation>
    <scope>NUCLEOTIDE SEQUENCE [LARGE SCALE GENOMIC DNA]</scope>
    <source>
        <strain>B100</strain>
    </source>
</reference>
<keyword id="KW-0012">Acyltransferase</keyword>
<keyword id="KW-0133">Cell shape</keyword>
<keyword id="KW-0961">Cell wall biogenesis/degradation</keyword>
<keyword id="KW-0963">Cytoplasm</keyword>
<keyword id="KW-0460">Magnesium</keyword>
<keyword id="KW-0479">Metal-binding</keyword>
<keyword id="KW-0511">Multifunctional enzyme</keyword>
<keyword id="KW-0548">Nucleotidyltransferase</keyword>
<keyword id="KW-0573">Peptidoglycan synthesis</keyword>
<keyword id="KW-0677">Repeat</keyword>
<keyword id="KW-0808">Transferase</keyword>
<protein>
    <recommendedName>
        <fullName evidence="1">Bifunctional protein GlmU</fullName>
    </recommendedName>
    <domain>
        <recommendedName>
            <fullName evidence="1">UDP-N-acetylglucosamine pyrophosphorylase</fullName>
            <ecNumber evidence="1">2.7.7.23</ecNumber>
        </recommendedName>
        <alternativeName>
            <fullName evidence="1">N-acetylglucosamine-1-phosphate uridyltransferase</fullName>
        </alternativeName>
    </domain>
    <domain>
        <recommendedName>
            <fullName evidence="1">Glucosamine-1-phosphate N-acetyltransferase</fullName>
            <ecNumber evidence="1">2.3.1.157</ecNumber>
        </recommendedName>
    </domain>
</protein>
<evidence type="ECO:0000255" key="1">
    <source>
        <dbReference type="HAMAP-Rule" id="MF_01631"/>
    </source>
</evidence>
<name>GLMU_XANCB</name>
<accession>B0RWB8</accession>
<feature type="chain" id="PRO_1000186511" description="Bifunctional protein GlmU">
    <location>
        <begin position="1"/>
        <end position="454"/>
    </location>
</feature>
<feature type="region of interest" description="Pyrophosphorylase" evidence="1">
    <location>
        <begin position="1"/>
        <end position="228"/>
    </location>
</feature>
<feature type="region of interest" description="Linker" evidence="1">
    <location>
        <begin position="229"/>
        <end position="249"/>
    </location>
</feature>
<feature type="region of interest" description="N-acetyltransferase" evidence="1">
    <location>
        <begin position="250"/>
        <end position="454"/>
    </location>
</feature>
<feature type="active site" description="Proton acceptor" evidence="1">
    <location>
        <position position="362"/>
    </location>
</feature>
<feature type="binding site" evidence="1">
    <location>
        <begin position="10"/>
        <end position="13"/>
    </location>
    <ligand>
        <name>UDP-N-acetyl-alpha-D-glucosamine</name>
        <dbReference type="ChEBI" id="CHEBI:57705"/>
    </ligand>
</feature>
<feature type="binding site" evidence="1">
    <location>
        <position position="24"/>
    </location>
    <ligand>
        <name>UDP-N-acetyl-alpha-D-glucosamine</name>
        <dbReference type="ChEBI" id="CHEBI:57705"/>
    </ligand>
</feature>
<feature type="binding site" evidence="1">
    <location>
        <position position="76"/>
    </location>
    <ligand>
        <name>UDP-N-acetyl-alpha-D-glucosamine</name>
        <dbReference type="ChEBI" id="CHEBI:57705"/>
    </ligand>
</feature>
<feature type="binding site" evidence="1">
    <location>
        <begin position="81"/>
        <end position="82"/>
    </location>
    <ligand>
        <name>UDP-N-acetyl-alpha-D-glucosamine</name>
        <dbReference type="ChEBI" id="CHEBI:57705"/>
    </ligand>
</feature>
<feature type="binding site" evidence="1">
    <location>
        <begin position="103"/>
        <end position="105"/>
    </location>
    <ligand>
        <name>UDP-N-acetyl-alpha-D-glucosamine</name>
        <dbReference type="ChEBI" id="CHEBI:57705"/>
    </ligand>
</feature>
<feature type="binding site" evidence="1">
    <location>
        <position position="105"/>
    </location>
    <ligand>
        <name>Mg(2+)</name>
        <dbReference type="ChEBI" id="CHEBI:18420"/>
    </ligand>
</feature>
<feature type="binding site" evidence="1">
    <location>
        <position position="138"/>
    </location>
    <ligand>
        <name>UDP-N-acetyl-alpha-D-glucosamine</name>
        <dbReference type="ChEBI" id="CHEBI:57705"/>
    </ligand>
</feature>
<feature type="binding site" evidence="1">
    <location>
        <position position="153"/>
    </location>
    <ligand>
        <name>UDP-N-acetyl-alpha-D-glucosamine</name>
        <dbReference type="ChEBI" id="CHEBI:57705"/>
    </ligand>
</feature>
<feature type="binding site" evidence="1">
    <location>
        <position position="168"/>
    </location>
    <ligand>
        <name>UDP-N-acetyl-alpha-D-glucosamine</name>
        <dbReference type="ChEBI" id="CHEBI:57705"/>
    </ligand>
</feature>
<feature type="binding site" evidence="1">
    <location>
        <position position="226"/>
    </location>
    <ligand>
        <name>Mg(2+)</name>
        <dbReference type="ChEBI" id="CHEBI:18420"/>
    </ligand>
</feature>
<feature type="binding site" evidence="1">
    <location>
        <position position="226"/>
    </location>
    <ligand>
        <name>UDP-N-acetyl-alpha-D-glucosamine</name>
        <dbReference type="ChEBI" id="CHEBI:57705"/>
    </ligand>
</feature>
<feature type="binding site" evidence="1">
    <location>
        <position position="332"/>
    </location>
    <ligand>
        <name>UDP-N-acetyl-alpha-D-glucosamine</name>
        <dbReference type="ChEBI" id="CHEBI:57705"/>
    </ligand>
</feature>
<feature type="binding site" evidence="1">
    <location>
        <position position="350"/>
    </location>
    <ligand>
        <name>UDP-N-acetyl-alpha-D-glucosamine</name>
        <dbReference type="ChEBI" id="CHEBI:57705"/>
    </ligand>
</feature>
<feature type="binding site" evidence="1">
    <location>
        <position position="365"/>
    </location>
    <ligand>
        <name>UDP-N-acetyl-alpha-D-glucosamine</name>
        <dbReference type="ChEBI" id="CHEBI:57705"/>
    </ligand>
</feature>
<feature type="binding site" evidence="1">
    <location>
        <position position="376"/>
    </location>
    <ligand>
        <name>UDP-N-acetyl-alpha-D-glucosamine</name>
        <dbReference type="ChEBI" id="CHEBI:57705"/>
    </ligand>
</feature>
<feature type="binding site" evidence="1">
    <location>
        <position position="379"/>
    </location>
    <ligand>
        <name>acetyl-CoA</name>
        <dbReference type="ChEBI" id="CHEBI:57288"/>
    </ligand>
</feature>
<feature type="binding site" evidence="1">
    <location>
        <begin position="385"/>
        <end position="386"/>
    </location>
    <ligand>
        <name>acetyl-CoA</name>
        <dbReference type="ChEBI" id="CHEBI:57288"/>
    </ligand>
</feature>
<feature type="binding site" evidence="1">
    <location>
        <position position="404"/>
    </location>
    <ligand>
        <name>acetyl-CoA</name>
        <dbReference type="ChEBI" id="CHEBI:57288"/>
    </ligand>
</feature>
<feature type="binding site" evidence="1">
    <location>
        <position position="422"/>
    </location>
    <ligand>
        <name>acetyl-CoA</name>
        <dbReference type="ChEBI" id="CHEBI:57288"/>
    </ligand>
</feature>
<feature type="binding site" evidence="1">
    <location>
        <position position="439"/>
    </location>
    <ligand>
        <name>acetyl-CoA</name>
        <dbReference type="ChEBI" id="CHEBI:57288"/>
    </ligand>
</feature>
<proteinExistence type="inferred from homology"/>
<gene>
    <name evidence="1" type="primary">glmU</name>
    <name type="ordered locus">xcc-b100_3790</name>
</gene>